<proteinExistence type="inferred from homology"/>
<name>GMHA_SYNC1</name>
<accession>Q3A538</accession>
<feature type="chain" id="PRO_1000092282" description="Phosphoheptose isomerase">
    <location>
        <begin position="1"/>
        <end position="196"/>
    </location>
</feature>
<feature type="domain" description="SIS" evidence="1">
    <location>
        <begin position="35"/>
        <end position="194"/>
    </location>
</feature>
<feature type="binding site" evidence="1">
    <location>
        <begin position="50"/>
        <end position="52"/>
    </location>
    <ligand>
        <name>substrate</name>
    </ligand>
</feature>
<feature type="binding site" evidence="1">
    <location>
        <position position="59"/>
    </location>
    <ligand>
        <name>Zn(2+)</name>
        <dbReference type="ChEBI" id="CHEBI:29105"/>
    </ligand>
</feature>
<feature type="binding site" evidence="1">
    <location>
        <position position="63"/>
    </location>
    <ligand>
        <name>substrate</name>
    </ligand>
</feature>
<feature type="binding site" evidence="1">
    <location>
        <position position="63"/>
    </location>
    <ligand>
        <name>Zn(2+)</name>
        <dbReference type="ChEBI" id="CHEBI:29105"/>
    </ligand>
</feature>
<feature type="binding site" evidence="1">
    <location>
        <begin position="92"/>
        <end position="93"/>
    </location>
    <ligand>
        <name>substrate</name>
    </ligand>
</feature>
<feature type="binding site" evidence="1">
    <location>
        <begin position="118"/>
        <end position="120"/>
    </location>
    <ligand>
        <name>substrate</name>
    </ligand>
</feature>
<feature type="binding site" evidence="1">
    <location>
        <position position="123"/>
    </location>
    <ligand>
        <name>substrate</name>
    </ligand>
</feature>
<feature type="binding site" evidence="1">
    <location>
        <position position="170"/>
    </location>
    <ligand>
        <name>substrate</name>
    </ligand>
</feature>
<feature type="binding site" evidence="1">
    <location>
        <position position="170"/>
    </location>
    <ligand>
        <name>Zn(2+)</name>
        <dbReference type="ChEBI" id="CHEBI:29105"/>
    </ligand>
</feature>
<feature type="binding site" evidence="1">
    <location>
        <position position="178"/>
    </location>
    <ligand>
        <name>Zn(2+)</name>
        <dbReference type="ChEBI" id="CHEBI:29105"/>
    </ligand>
</feature>
<keyword id="KW-0119">Carbohydrate metabolism</keyword>
<keyword id="KW-0963">Cytoplasm</keyword>
<keyword id="KW-0413">Isomerase</keyword>
<keyword id="KW-0479">Metal-binding</keyword>
<keyword id="KW-1185">Reference proteome</keyword>
<keyword id="KW-0862">Zinc</keyword>
<reference key="1">
    <citation type="submission" date="2005-10" db="EMBL/GenBank/DDBJ databases">
        <title>Complete sequence of Pelobacter carbinolicus DSM 2380.</title>
        <authorList>
            <person name="Copeland A."/>
            <person name="Lucas S."/>
            <person name="Lapidus A."/>
            <person name="Barry K."/>
            <person name="Detter J.C."/>
            <person name="Glavina T."/>
            <person name="Hammon N."/>
            <person name="Israni S."/>
            <person name="Pitluck S."/>
            <person name="Chertkov O."/>
            <person name="Schmutz J."/>
            <person name="Larimer F."/>
            <person name="Land M."/>
            <person name="Kyrpides N."/>
            <person name="Ivanova N."/>
            <person name="Richardson P."/>
        </authorList>
    </citation>
    <scope>NUCLEOTIDE SEQUENCE [LARGE SCALE GENOMIC DNA]</scope>
    <source>
        <strain>DSM 2380 / NBRC 103641 / GraBd1</strain>
    </source>
</reference>
<gene>
    <name evidence="1" type="primary">gmhA</name>
    <name type="ordered locus">Pcar_1270</name>
</gene>
<dbReference type="EC" id="5.3.1.28" evidence="1"/>
<dbReference type="EMBL" id="CP000142">
    <property type="protein sequence ID" value="ABA88519.1"/>
    <property type="molecule type" value="Genomic_DNA"/>
</dbReference>
<dbReference type="RefSeq" id="WP_011340994.1">
    <property type="nucleotide sequence ID" value="NC_007498.2"/>
</dbReference>
<dbReference type="SMR" id="Q3A538"/>
<dbReference type="STRING" id="338963.Pcar_1270"/>
<dbReference type="KEGG" id="pca:Pcar_1270"/>
<dbReference type="eggNOG" id="COG0279">
    <property type="taxonomic scope" value="Bacteria"/>
</dbReference>
<dbReference type="HOGENOM" id="CLU_080999_4_0_7"/>
<dbReference type="OrthoDB" id="9810929at2"/>
<dbReference type="UniPathway" id="UPA00041">
    <property type="reaction ID" value="UER00436"/>
</dbReference>
<dbReference type="Proteomes" id="UP000002534">
    <property type="component" value="Chromosome"/>
</dbReference>
<dbReference type="GO" id="GO:0005737">
    <property type="term" value="C:cytoplasm"/>
    <property type="evidence" value="ECO:0007669"/>
    <property type="project" value="UniProtKB-SubCell"/>
</dbReference>
<dbReference type="GO" id="GO:0097367">
    <property type="term" value="F:carbohydrate derivative binding"/>
    <property type="evidence" value="ECO:0007669"/>
    <property type="project" value="InterPro"/>
</dbReference>
<dbReference type="GO" id="GO:0008968">
    <property type="term" value="F:D-sedoheptulose 7-phosphate isomerase activity"/>
    <property type="evidence" value="ECO:0007669"/>
    <property type="project" value="UniProtKB-UniRule"/>
</dbReference>
<dbReference type="GO" id="GO:0008270">
    <property type="term" value="F:zinc ion binding"/>
    <property type="evidence" value="ECO:0007669"/>
    <property type="project" value="UniProtKB-UniRule"/>
</dbReference>
<dbReference type="GO" id="GO:0005975">
    <property type="term" value="P:carbohydrate metabolic process"/>
    <property type="evidence" value="ECO:0007669"/>
    <property type="project" value="UniProtKB-UniRule"/>
</dbReference>
<dbReference type="GO" id="GO:2001061">
    <property type="term" value="P:D-glycero-D-manno-heptose 7-phosphate biosynthetic process"/>
    <property type="evidence" value="ECO:0007669"/>
    <property type="project" value="UniProtKB-UniPathway"/>
</dbReference>
<dbReference type="CDD" id="cd05006">
    <property type="entry name" value="SIS_GmhA"/>
    <property type="match status" value="1"/>
</dbReference>
<dbReference type="Gene3D" id="3.40.50.10490">
    <property type="entry name" value="Glucose-6-phosphate isomerase like protein, domain 1"/>
    <property type="match status" value="1"/>
</dbReference>
<dbReference type="HAMAP" id="MF_00067">
    <property type="entry name" value="GmhA"/>
    <property type="match status" value="1"/>
</dbReference>
<dbReference type="InterPro" id="IPR035461">
    <property type="entry name" value="GmhA/DiaA"/>
</dbReference>
<dbReference type="InterPro" id="IPR004515">
    <property type="entry name" value="Phosphoheptose_Isoase"/>
</dbReference>
<dbReference type="InterPro" id="IPR001347">
    <property type="entry name" value="SIS_dom"/>
</dbReference>
<dbReference type="InterPro" id="IPR046348">
    <property type="entry name" value="SIS_dom_sf"/>
</dbReference>
<dbReference type="InterPro" id="IPR050099">
    <property type="entry name" value="SIS_GmhA/DiaA_subfam"/>
</dbReference>
<dbReference type="PANTHER" id="PTHR30390:SF6">
    <property type="entry name" value="DNAA INITIATOR-ASSOCIATING PROTEIN DIAA"/>
    <property type="match status" value="1"/>
</dbReference>
<dbReference type="PANTHER" id="PTHR30390">
    <property type="entry name" value="SEDOHEPTULOSE 7-PHOSPHATE ISOMERASE / DNAA INITIATOR-ASSOCIATING FACTOR FOR REPLICATION INITIATION"/>
    <property type="match status" value="1"/>
</dbReference>
<dbReference type="Pfam" id="PF13580">
    <property type="entry name" value="SIS_2"/>
    <property type="match status" value="1"/>
</dbReference>
<dbReference type="SUPFAM" id="SSF53697">
    <property type="entry name" value="SIS domain"/>
    <property type="match status" value="1"/>
</dbReference>
<dbReference type="PROSITE" id="PS51464">
    <property type="entry name" value="SIS"/>
    <property type="match status" value="1"/>
</dbReference>
<sequence length="196" mass="21128">MTTVAIQTYFQELRDVVDRVGREKVDQIRQSVQLLTACLRCGGKVLIMGNGGSAADAQHFAAELVGRFLMERKALPSIALTTDTSILTAVGNDYGFDEIFKRQIEALADPRDVVIGLSTSGMSNNVFHALTAANQVGCKTIGLLGREGGSIASIVDVNLTVPEHHTPYIQTAHGAVLHLFCDLLEKELFTPSGQTE</sequence>
<evidence type="ECO:0000255" key="1">
    <source>
        <dbReference type="HAMAP-Rule" id="MF_00067"/>
    </source>
</evidence>
<protein>
    <recommendedName>
        <fullName evidence="1">Phosphoheptose isomerase</fullName>
        <ecNumber evidence="1">5.3.1.28</ecNumber>
    </recommendedName>
    <alternativeName>
        <fullName evidence="1">Sedoheptulose 7-phosphate isomerase</fullName>
    </alternativeName>
</protein>
<comment type="function">
    <text evidence="1">Catalyzes the isomerization of sedoheptulose 7-phosphate in D-glycero-D-manno-heptose 7-phosphate.</text>
</comment>
<comment type="catalytic activity">
    <reaction evidence="1">
        <text>2 D-sedoheptulose 7-phosphate = D-glycero-alpha-D-manno-heptose 7-phosphate + D-glycero-beta-D-manno-heptose 7-phosphate</text>
        <dbReference type="Rhea" id="RHEA:27489"/>
        <dbReference type="ChEBI" id="CHEBI:57483"/>
        <dbReference type="ChEBI" id="CHEBI:60203"/>
        <dbReference type="ChEBI" id="CHEBI:60204"/>
        <dbReference type="EC" id="5.3.1.28"/>
    </reaction>
</comment>
<comment type="cofactor">
    <cofactor evidence="1">
        <name>Zn(2+)</name>
        <dbReference type="ChEBI" id="CHEBI:29105"/>
    </cofactor>
    <text evidence="1">Binds 1 zinc ion per subunit.</text>
</comment>
<comment type="pathway">
    <text evidence="1">Carbohydrate biosynthesis; D-glycero-D-manno-heptose 7-phosphate biosynthesis; D-glycero-alpha-D-manno-heptose 7-phosphate and D-glycero-beta-D-manno-heptose 7-phosphate from sedoheptulose 7-phosphate: step 1/1.</text>
</comment>
<comment type="subunit">
    <text evidence="1">Homotetramer.</text>
</comment>
<comment type="subcellular location">
    <subcellularLocation>
        <location evidence="1">Cytoplasm</location>
    </subcellularLocation>
</comment>
<comment type="miscellaneous">
    <text evidence="1">The reaction produces a racemic mixture of D-glycero-alpha-D-manno-heptose 7-phosphate and D-glycero-beta-D-manno-heptose 7-phosphate.</text>
</comment>
<comment type="similarity">
    <text evidence="1">Belongs to the SIS family. GmhA subfamily.</text>
</comment>
<organism>
    <name type="scientific">Syntrophotalea carbinolica (strain DSM 2380 / NBRC 103641 / GraBd1)</name>
    <name type="common">Pelobacter carbinolicus</name>
    <dbReference type="NCBI Taxonomy" id="338963"/>
    <lineage>
        <taxon>Bacteria</taxon>
        <taxon>Pseudomonadati</taxon>
        <taxon>Thermodesulfobacteriota</taxon>
        <taxon>Desulfuromonadia</taxon>
        <taxon>Desulfuromonadales</taxon>
        <taxon>Syntrophotaleaceae</taxon>
        <taxon>Syntrophotalea</taxon>
    </lineage>
</organism>